<comment type="function">
    <text evidence="1">F(1)F(0) ATP synthase produces ATP from ADP in the presence of a proton or sodium gradient. F-type ATPases consist of two structural domains, F(1) containing the extramembraneous catalytic core and F(0) containing the membrane proton channel, linked together by a central stalk and a peripheral stalk. During catalysis, ATP synthesis in the catalytic domain of F(1) is coupled via a rotary mechanism of the central stalk subunits to proton translocation.</text>
</comment>
<comment type="function">
    <text evidence="1">This protein is part of the stalk that links CF(0) to CF(1). It either transmits conformational changes from CF(0) to CF(1) or is implicated in proton conduction.</text>
</comment>
<comment type="subunit">
    <text evidence="1">F-type ATPases have 2 components, F(1) - the catalytic core - and F(0) - the membrane proton channel. F(1) has five subunits: alpha(3), beta(3), gamma(1), delta(1), epsilon(1). F(0) has three main subunits: a(1), b(2) and c(10-14). The alpha and beta chains form an alternating ring which encloses part of the gamma chain. F(1) is attached to F(0) by a central stalk formed by the gamma and epsilon chains, while a peripheral stalk is formed by the delta and b chains.</text>
</comment>
<comment type="subcellular location">
    <subcellularLocation>
        <location evidence="1">Cell membrane</location>
        <topology evidence="1">Peripheral membrane protein</topology>
    </subcellularLocation>
</comment>
<comment type="similarity">
    <text evidence="1">Belongs to the ATPase delta chain family.</text>
</comment>
<sequence>MRGEASRIADRVSRDSLAPKLRDSGEDAWRIGNELFTITNVLDHNIQLERALTDPSRPVEDKVAVVKTLIGDEAHPLTMEIMSDLVARRWSRVSDIANAAEDFGVDGMMYYADHTNATLQVSIELAQLHSALLNLPVVRSKLYDATVPAEARIKLLYSLIGNADFNVVTKRLAEHATCNLRNRRYLQTIQWLINKFSRHMGESMVTVTTATPLSKEQVKKLVAIYSAKTGHPVHINSVVDPTVLGGMRIQVGDEVTDNTVVAQLQHLQRTVKATA</sequence>
<organism>
    <name type="scientific">Bifidobacterium adolescentis (strain ATCC 15703 / DSM 20083 / NCTC 11814 / E194a)</name>
    <dbReference type="NCBI Taxonomy" id="367928"/>
    <lineage>
        <taxon>Bacteria</taxon>
        <taxon>Bacillati</taxon>
        <taxon>Actinomycetota</taxon>
        <taxon>Actinomycetes</taxon>
        <taxon>Bifidobacteriales</taxon>
        <taxon>Bifidobacteriaceae</taxon>
        <taxon>Bifidobacterium</taxon>
    </lineage>
</organism>
<name>ATPD_BIFAA</name>
<dbReference type="EMBL" id="AP009256">
    <property type="protein sequence ID" value="BAF40211.1"/>
    <property type="molecule type" value="Genomic_DNA"/>
</dbReference>
<dbReference type="RefSeq" id="WP_011743720.1">
    <property type="nucleotide sequence ID" value="NC_008618.1"/>
</dbReference>
<dbReference type="SMR" id="A1A3C8"/>
<dbReference type="STRING" id="367928.BAD_1430"/>
<dbReference type="PaxDb" id="1680-BADO_1601"/>
<dbReference type="GeneID" id="4557545"/>
<dbReference type="KEGG" id="bad:BAD_1430"/>
<dbReference type="HOGENOM" id="CLU_088880_0_0_11"/>
<dbReference type="Proteomes" id="UP000008702">
    <property type="component" value="Chromosome"/>
</dbReference>
<dbReference type="GO" id="GO:0005886">
    <property type="term" value="C:plasma membrane"/>
    <property type="evidence" value="ECO:0007669"/>
    <property type="project" value="UniProtKB-SubCell"/>
</dbReference>
<dbReference type="GO" id="GO:0045259">
    <property type="term" value="C:proton-transporting ATP synthase complex"/>
    <property type="evidence" value="ECO:0007669"/>
    <property type="project" value="UniProtKB-KW"/>
</dbReference>
<dbReference type="GO" id="GO:0046933">
    <property type="term" value="F:proton-transporting ATP synthase activity, rotational mechanism"/>
    <property type="evidence" value="ECO:0007669"/>
    <property type="project" value="UniProtKB-UniRule"/>
</dbReference>
<dbReference type="HAMAP" id="MF_01416">
    <property type="entry name" value="ATP_synth_delta_bact"/>
    <property type="match status" value="1"/>
</dbReference>
<dbReference type="InterPro" id="IPR020781">
    <property type="entry name" value="ATPase_OSCP/d_CS"/>
</dbReference>
<dbReference type="InterPro" id="IPR000711">
    <property type="entry name" value="ATPase_OSCP/dsu"/>
</dbReference>
<dbReference type="NCBIfam" id="NF009967">
    <property type="entry name" value="PRK13430.1"/>
    <property type="match status" value="1"/>
</dbReference>
<dbReference type="PANTHER" id="PTHR11910">
    <property type="entry name" value="ATP SYNTHASE DELTA CHAIN"/>
    <property type="match status" value="1"/>
</dbReference>
<dbReference type="Pfam" id="PF00213">
    <property type="entry name" value="OSCP"/>
    <property type="match status" value="1"/>
</dbReference>
<dbReference type="PRINTS" id="PR00125">
    <property type="entry name" value="ATPASEDELTA"/>
</dbReference>
<dbReference type="PROSITE" id="PS00389">
    <property type="entry name" value="ATPASE_DELTA"/>
    <property type="match status" value="1"/>
</dbReference>
<feature type="chain" id="PRO_0000382060" description="ATP synthase subunit delta">
    <location>
        <begin position="1"/>
        <end position="275"/>
    </location>
</feature>
<proteinExistence type="inferred from homology"/>
<keyword id="KW-0066">ATP synthesis</keyword>
<keyword id="KW-1003">Cell membrane</keyword>
<keyword id="KW-0139">CF(1)</keyword>
<keyword id="KW-0375">Hydrogen ion transport</keyword>
<keyword id="KW-0406">Ion transport</keyword>
<keyword id="KW-0472">Membrane</keyword>
<keyword id="KW-1185">Reference proteome</keyword>
<keyword id="KW-0813">Transport</keyword>
<accession>A1A3C8</accession>
<reference key="1">
    <citation type="submission" date="2006-12" db="EMBL/GenBank/DDBJ databases">
        <title>Bifidobacterium adolescentis complete genome sequence.</title>
        <authorList>
            <person name="Suzuki T."/>
            <person name="Tsuda Y."/>
            <person name="Kanou N."/>
            <person name="Inoue T."/>
            <person name="Kumazaki K."/>
            <person name="Nagano S."/>
            <person name="Hirai S."/>
            <person name="Tanaka K."/>
            <person name="Watanabe K."/>
        </authorList>
    </citation>
    <scope>NUCLEOTIDE SEQUENCE [LARGE SCALE GENOMIC DNA]</scope>
    <source>
        <strain>ATCC 15703 / DSM 20083 / NCTC 11814 / E194a</strain>
    </source>
</reference>
<evidence type="ECO:0000255" key="1">
    <source>
        <dbReference type="HAMAP-Rule" id="MF_01416"/>
    </source>
</evidence>
<protein>
    <recommendedName>
        <fullName evidence="1">ATP synthase subunit delta</fullName>
    </recommendedName>
    <alternativeName>
        <fullName evidence="1">ATP synthase F(1) sector subunit delta</fullName>
    </alternativeName>
    <alternativeName>
        <fullName evidence="1">F-type ATPase subunit delta</fullName>
        <shortName evidence="1">F-ATPase subunit delta</shortName>
    </alternativeName>
</protein>
<gene>
    <name evidence="1" type="primary">atpH</name>
    <name type="ordered locus">BAD_1430</name>
</gene>